<dbReference type="EMBL" id="AF147644">
    <property type="protein sequence ID" value="AAL14043.1"/>
    <property type="molecule type" value="Genomic_DNA"/>
</dbReference>
<dbReference type="SMR" id="Q94Y64"/>
<dbReference type="GO" id="GO:0005743">
    <property type="term" value="C:mitochondrial inner membrane"/>
    <property type="evidence" value="ECO:0007669"/>
    <property type="project" value="UniProtKB-SubCell"/>
</dbReference>
<dbReference type="GO" id="GO:0045275">
    <property type="term" value="C:respiratory chain complex III"/>
    <property type="evidence" value="ECO:0007669"/>
    <property type="project" value="InterPro"/>
</dbReference>
<dbReference type="GO" id="GO:0046872">
    <property type="term" value="F:metal ion binding"/>
    <property type="evidence" value="ECO:0007669"/>
    <property type="project" value="UniProtKB-KW"/>
</dbReference>
<dbReference type="GO" id="GO:0008121">
    <property type="term" value="F:ubiquinol-cytochrome-c reductase activity"/>
    <property type="evidence" value="ECO:0007669"/>
    <property type="project" value="InterPro"/>
</dbReference>
<dbReference type="GO" id="GO:0006122">
    <property type="term" value="P:mitochondrial electron transport, ubiquinol to cytochrome c"/>
    <property type="evidence" value="ECO:0007669"/>
    <property type="project" value="TreeGrafter"/>
</dbReference>
<dbReference type="CDD" id="cd00290">
    <property type="entry name" value="cytochrome_b_C"/>
    <property type="match status" value="1"/>
</dbReference>
<dbReference type="CDD" id="cd00284">
    <property type="entry name" value="Cytochrome_b_N"/>
    <property type="match status" value="1"/>
</dbReference>
<dbReference type="FunFam" id="1.20.810.10:FF:000002">
    <property type="entry name" value="Cytochrome b"/>
    <property type="match status" value="1"/>
</dbReference>
<dbReference type="Gene3D" id="1.20.810.10">
    <property type="entry name" value="Cytochrome Bc1 Complex, Chain C"/>
    <property type="match status" value="1"/>
</dbReference>
<dbReference type="InterPro" id="IPR005798">
    <property type="entry name" value="Cyt_b/b6_C"/>
</dbReference>
<dbReference type="InterPro" id="IPR036150">
    <property type="entry name" value="Cyt_b/b6_C_sf"/>
</dbReference>
<dbReference type="InterPro" id="IPR005797">
    <property type="entry name" value="Cyt_b/b6_N"/>
</dbReference>
<dbReference type="InterPro" id="IPR027387">
    <property type="entry name" value="Cytb/b6-like_sf"/>
</dbReference>
<dbReference type="InterPro" id="IPR030689">
    <property type="entry name" value="Cytochrome_b"/>
</dbReference>
<dbReference type="InterPro" id="IPR048260">
    <property type="entry name" value="Cytochrome_b_C_euk/bac"/>
</dbReference>
<dbReference type="InterPro" id="IPR048259">
    <property type="entry name" value="Cytochrome_b_N_euk/bac"/>
</dbReference>
<dbReference type="InterPro" id="IPR016174">
    <property type="entry name" value="Di-haem_cyt_TM"/>
</dbReference>
<dbReference type="PANTHER" id="PTHR19271">
    <property type="entry name" value="CYTOCHROME B"/>
    <property type="match status" value="1"/>
</dbReference>
<dbReference type="PANTHER" id="PTHR19271:SF16">
    <property type="entry name" value="CYTOCHROME B"/>
    <property type="match status" value="1"/>
</dbReference>
<dbReference type="Pfam" id="PF00032">
    <property type="entry name" value="Cytochrom_B_C"/>
    <property type="match status" value="1"/>
</dbReference>
<dbReference type="Pfam" id="PF00033">
    <property type="entry name" value="Cytochrome_B"/>
    <property type="match status" value="1"/>
</dbReference>
<dbReference type="PIRSF" id="PIRSF038885">
    <property type="entry name" value="COB"/>
    <property type="match status" value="1"/>
</dbReference>
<dbReference type="SUPFAM" id="SSF81648">
    <property type="entry name" value="a domain/subunit of cytochrome bc1 complex (Ubiquinol-cytochrome c reductase)"/>
    <property type="match status" value="1"/>
</dbReference>
<dbReference type="SUPFAM" id="SSF81342">
    <property type="entry name" value="Transmembrane di-heme cytochromes"/>
    <property type="match status" value="1"/>
</dbReference>
<dbReference type="PROSITE" id="PS51003">
    <property type="entry name" value="CYTB_CTER"/>
    <property type="match status" value="1"/>
</dbReference>
<dbReference type="PROSITE" id="PS51002">
    <property type="entry name" value="CYTB_NTER"/>
    <property type="match status" value="1"/>
</dbReference>
<reference key="1">
    <citation type="journal article" date="2001" name="Mol. Phylogenet. Evol.">
        <title>Molecular phylogeny of the chipmunks inferred from mitochondrial cytochrome b and cytochrome oxidase II gene sequences.</title>
        <authorList>
            <person name="Piaggio A.J."/>
            <person name="Spicer G.S."/>
        </authorList>
    </citation>
    <scope>NUCLEOTIDE SEQUENCE [GENOMIC DNA]</scope>
</reference>
<evidence type="ECO:0000250" key="1"/>
<evidence type="ECO:0000250" key="2">
    <source>
        <dbReference type="UniProtKB" id="P00157"/>
    </source>
</evidence>
<evidence type="ECO:0000255" key="3">
    <source>
        <dbReference type="PROSITE-ProRule" id="PRU00967"/>
    </source>
</evidence>
<evidence type="ECO:0000255" key="4">
    <source>
        <dbReference type="PROSITE-ProRule" id="PRU00968"/>
    </source>
</evidence>
<keyword id="KW-0249">Electron transport</keyword>
<keyword id="KW-0349">Heme</keyword>
<keyword id="KW-0408">Iron</keyword>
<keyword id="KW-0472">Membrane</keyword>
<keyword id="KW-0479">Metal-binding</keyword>
<keyword id="KW-0496">Mitochondrion</keyword>
<keyword id="KW-0999">Mitochondrion inner membrane</keyword>
<keyword id="KW-0679">Respiratory chain</keyword>
<keyword id="KW-0812">Transmembrane</keyword>
<keyword id="KW-1133">Transmembrane helix</keyword>
<keyword id="KW-0813">Transport</keyword>
<keyword id="KW-0830">Ubiquinone</keyword>
<sequence length="379" mass="43024">MTNIRKTHPLIKIINHSFIDLPAPSNISAWWNFGSLLGICLIIQILTGLFLAMHYTSDTMTAFSSVTHICRDVNYGWLIRYMHANGASMFFICLFLHVGRGLYYGSYTYFETWNIGVILLFAVMATAFMGYVLPWGQMSFWGATVITNLLSAIPYIGTTLVEWIWGGFSVDKATLTRFFAFHFILPFIITALVMVHLLFLHETGSNNPSGLISNSDKIPFHPYYTIKDILGILLLILALMTLVLFSPDLLGDPDNYTPANPLNTPPHIKPEWYFLFAYAILRSIPNKLGGVLALVLSILILMLFPILHMSKQRSMMFRPLSQCMFWILVADLFTLTWIGGQPVEYPFIIIGQLASILYFTIIILILPAISLFENKLLKW</sequence>
<name>CYB_TAMMR</name>
<geneLocation type="mitochondrion"/>
<accession>Q94Y64</accession>
<feature type="chain" id="PRO_0000257947" description="Cytochrome b">
    <location>
        <begin position="1"/>
        <end position="379"/>
    </location>
</feature>
<feature type="transmembrane region" description="Helical" evidence="2">
    <location>
        <begin position="33"/>
        <end position="53"/>
    </location>
</feature>
<feature type="transmembrane region" description="Helical" evidence="2">
    <location>
        <begin position="77"/>
        <end position="98"/>
    </location>
</feature>
<feature type="transmembrane region" description="Helical" evidence="2">
    <location>
        <begin position="113"/>
        <end position="133"/>
    </location>
</feature>
<feature type="transmembrane region" description="Helical" evidence="2">
    <location>
        <begin position="178"/>
        <end position="198"/>
    </location>
</feature>
<feature type="transmembrane region" description="Helical" evidence="2">
    <location>
        <begin position="226"/>
        <end position="246"/>
    </location>
</feature>
<feature type="transmembrane region" description="Helical" evidence="2">
    <location>
        <begin position="288"/>
        <end position="308"/>
    </location>
</feature>
<feature type="transmembrane region" description="Helical" evidence="2">
    <location>
        <begin position="320"/>
        <end position="340"/>
    </location>
</feature>
<feature type="transmembrane region" description="Helical" evidence="2">
    <location>
        <begin position="347"/>
        <end position="367"/>
    </location>
</feature>
<feature type="binding site" description="axial binding residue" evidence="2">
    <location>
        <position position="83"/>
    </location>
    <ligand>
        <name>heme b</name>
        <dbReference type="ChEBI" id="CHEBI:60344"/>
        <label>b562</label>
    </ligand>
    <ligandPart>
        <name>Fe</name>
        <dbReference type="ChEBI" id="CHEBI:18248"/>
    </ligandPart>
</feature>
<feature type="binding site" description="axial binding residue" evidence="2">
    <location>
        <position position="97"/>
    </location>
    <ligand>
        <name>heme b</name>
        <dbReference type="ChEBI" id="CHEBI:60344"/>
        <label>b566</label>
    </ligand>
    <ligandPart>
        <name>Fe</name>
        <dbReference type="ChEBI" id="CHEBI:18248"/>
    </ligandPart>
</feature>
<feature type="binding site" description="axial binding residue" evidence="2">
    <location>
        <position position="182"/>
    </location>
    <ligand>
        <name>heme b</name>
        <dbReference type="ChEBI" id="CHEBI:60344"/>
        <label>b562</label>
    </ligand>
    <ligandPart>
        <name>Fe</name>
        <dbReference type="ChEBI" id="CHEBI:18248"/>
    </ligandPart>
</feature>
<feature type="binding site" description="axial binding residue" evidence="2">
    <location>
        <position position="196"/>
    </location>
    <ligand>
        <name>heme b</name>
        <dbReference type="ChEBI" id="CHEBI:60344"/>
        <label>b566</label>
    </ligand>
    <ligandPart>
        <name>Fe</name>
        <dbReference type="ChEBI" id="CHEBI:18248"/>
    </ligandPart>
</feature>
<feature type="binding site" evidence="2">
    <location>
        <position position="201"/>
    </location>
    <ligand>
        <name>a ubiquinone</name>
        <dbReference type="ChEBI" id="CHEBI:16389"/>
    </ligand>
</feature>
<proteinExistence type="inferred from homology"/>
<organism>
    <name type="scientific">Tamias merriami</name>
    <name type="common">Merriam's chipmunk</name>
    <name type="synonym">Neotamias merriami</name>
    <dbReference type="NCBI Taxonomy" id="123787"/>
    <lineage>
        <taxon>Eukaryota</taxon>
        <taxon>Metazoa</taxon>
        <taxon>Chordata</taxon>
        <taxon>Craniata</taxon>
        <taxon>Vertebrata</taxon>
        <taxon>Euteleostomi</taxon>
        <taxon>Mammalia</taxon>
        <taxon>Eutheria</taxon>
        <taxon>Euarchontoglires</taxon>
        <taxon>Glires</taxon>
        <taxon>Rodentia</taxon>
        <taxon>Sciuromorpha</taxon>
        <taxon>Sciuridae</taxon>
        <taxon>Xerinae</taxon>
        <taxon>Marmotini</taxon>
        <taxon>Tamias</taxon>
    </lineage>
</organism>
<comment type="function">
    <text evidence="2">Component of the ubiquinol-cytochrome c reductase complex (complex III or cytochrome b-c1 complex) that is part of the mitochondrial respiratory chain. The b-c1 complex mediates electron transfer from ubiquinol to cytochrome c. Contributes to the generation of a proton gradient across the mitochondrial membrane that is then used for ATP synthesis.</text>
</comment>
<comment type="cofactor">
    <cofactor evidence="2">
        <name>heme b</name>
        <dbReference type="ChEBI" id="CHEBI:60344"/>
    </cofactor>
    <text evidence="2">Binds 2 heme b groups non-covalently.</text>
</comment>
<comment type="subunit">
    <text evidence="2">The cytochrome bc1 complex contains 11 subunits: 3 respiratory subunits (MT-CYB, CYC1 and UQCRFS1), 2 core proteins (UQCRC1 and UQCRC2) and 6 low-molecular weight proteins (UQCRH/QCR6, UQCRB/QCR7, UQCRQ/QCR8, UQCR10/QCR9, UQCR11/QCR10 and a cleavage product of UQCRFS1). This cytochrome bc1 complex then forms a dimer.</text>
</comment>
<comment type="subcellular location">
    <subcellularLocation>
        <location evidence="2">Mitochondrion inner membrane</location>
        <topology evidence="2">Multi-pass membrane protein</topology>
    </subcellularLocation>
</comment>
<comment type="miscellaneous">
    <text evidence="1">Heme 1 (or BL or b562) is low-potential and absorbs at about 562 nm, and heme 2 (or BH or b566) is high-potential and absorbs at about 566 nm.</text>
</comment>
<comment type="similarity">
    <text evidence="3 4">Belongs to the cytochrome b family.</text>
</comment>
<comment type="caution">
    <text evidence="2">The full-length protein contains only eight transmembrane helices, not nine as predicted by bioinformatics tools.</text>
</comment>
<gene>
    <name type="primary">MT-CYB</name>
    <name type="synonym">COB</name>
    <name type="synonym">CYTB</name>
    <name type="synonym">MTCYB</name>
</gene>
<protein>
    <recommendedName>
        <fullName>Cytochrome b</fullName>
    </recommendedName>
    <alternativeName>
        <fullName>Complex III subunit 3</fullName>
    </alternativeName>
    <alternativeName>
        <fullName>Complex III subunit III</fullName>
    </alternativeName>
    <alternativeName>
        <fullName>Cytochrome b-c1 complex subunit 3</fullName>
    </alternativeName>
    <alternativeName>
        <fullName>Ubiquinol-cytochrome-c reductase complex cytochrome b subunit</fullName>
    </alternativeName>
</protein>